<evidence type="ECO:0000255" key="1">
    <source>
        <dbReference type="HAMAP-Rule" id="MF_00199"/>
    </source>
</evidence>
<dbReference type="EC" id="3.6.1.41" evidence="1"/>
<dbReference type="EMBL" id="CP000570">
    <property type="protein sequence ID" value="ABN85230.1"/>
    <property type="molecule type" value="Genomic_DNA"/>
</dbReference>
<dbReference type="RefSeq" id="WP_011852084.1">
    <property type="nucleotide sequence ID" value="NC_009074.1"/>
</dbReference>
<dbReference type="SMR" id="A3NCP7"/>
<dbReference type="KEGG" id="bpd:BURPS668_3106"/>
<dbReference type="HOGENOM" id="CLU_056184_1_0_4"/>
<dbReference type="GO" id="GO:0008803">
    <property type="term" value="F:bis(5'-nucleosyl)-tetraphosphatase (symmetrical) activity"/>
    <property type="evidence" value="ECO:0007669"/>
    <property type="project" value="UniProtKB-UniRule"/>
</dbReference>
<dbReference type="CDD" id="cd07422">
    <property type="entry name" value="MPP_ApaH"/>
    <property type="match status" value="1"/>
</dbReference>
<dbReference type="Gene3D" id="3.60.21.10">
    <property type="match status" value="1"/>
</dbReference>
<dbReference type="HAMAP" id="MF_00199">
    <property type="entry name" value="ApaH"/>
    <property type="match status" value="1"/>
</dbReference>
<dbReference type="InterPro" id="IPR004617">
    <property type="entry name" value="ApaH"/>
</dbReference>
<dbReference type="InterPro" id="IPR004843">
    <property type="entry name" value="Calcineurin-like_PHP_ApaH"/>
</dbReference>
<dbReference type="InterPro" id="IPR029052">
    <property type="entry name" value="Metallo-depent_PP-like"/>
</dbReference>
<dbReference type="NCBIfam" id="TIGR00668">
    <property type="entry name" value="apaH"/>
    <property type="match status" value="1"/>
</dbReference>
<dbReference type="NCBIfam" id="NF001204">
    <property type="entry name" value="PRK00166.1"/>
    <property type="match status" value="1"/>
</dbReference>
<dbReference type="PANTHER" id="PTHR40942">
    <property type="match status" value="1"/>
</dbReference>
<dbReference type="PANTHER" id="PTHR40942:SF4">
    <property type="entry name" value="CYTOCHROME C5"/>
    <property type="match status" value="1"/>
</dbReference>
<dbReference type="Pfam" id="PF00149">
    <property type="entry name" value="Metallophos"/>
    <property type="match status" value="1"/>
</dbReference>
<dbReference type="PIRSF" id="PIRSF000903">
    <property type="entry name" value="B5n-ttraPtase_sm"/>
    <property type="match status" value="1"/>
</dbReference>
<dbReference type="SUPFAM" id="SSF56300">
    <property type="entry name" value="Metallo-dependent phosphatases"/>
    <property type="match status" value="1"/>
</dbReference>
<reference key="1">
    <citation type="journal article" date="2010" name="Genome Biol. Evol.">
        <title>Continuing evolution of Burkholderia mallei through genome reduction and large-scale rearrangements.</title>
        <authorList>
            <person name="Losada L."/>
            <person name="Ronning C.M."/>
            <person name="DeShazer D."/>
            <person name="Woods D."/>
            <person name="Fedorova N."/>
            <person name="Kim H.S."/>
            <person name="Shabalina S.A."/>
            <person name="Pearson T.R."/>
            <person name="Brinkac L."/>
            <person name="Tan P."/>
            <person name="Nandi T."/>
            <person name="Crabtree J."/>
            <person name="Badger J."/>
            <person name="Beckstrom-Sternberg S."/>
            <person name="Saqib M."/>
            <person name="Schutzer S.E."/>
            <person name="Keim P."/>
            <person name="Nierman W.C."/>
        </authorList>
    </citation>
    <scope>NUCLEOTIDE SEQUENCE [LARGE SCALE GENOMIC DNA]</scope>
    <source>
        <strain>668</strain>
    </source>
</reference>
<feature type="chain" id="PRO_1000012051" description="Bis(5'-nucleosyl)-tetraphosphatase, symmetrical">
    <location>
        <begin position="1"/>
        <end position="282"/>
    </location>
</feature>
<comment type="function">
    <text evidence="1">Hydrolyzes diadenosine 5',5'''-P1,P4-tetraphosphate to yield ADP.</text>
</comment>
<comment type="catalytic activity">
    <reaction evidence="1">
        <text>P(1),P(4)-bis(5'-adenosyl) tetraphosphate + H2O = 2 ADP + 2 H(+)</text>
        <dbReference type="Rhea" id="RHEA:24252"/>
        <dbReference type="ChEBI" id="CHEBI:15377"/>
        <dbReference type="ChEBI" id="CHEBI:15378"/>
        <dbReference type="ChEBI" id="CHEBI:58141"/>
        <dbReference type="ChEBI" id="CHEBI:456216"/>
        <dbReference type="EC" id="3.6.1.41"/>
    </reaction>
</comment>
<comment type="similarity">
    <text evidence="1">Belongs to the Ap4A hydrolase family.</text>
</comment>
<protein>
    <recommendedName>
        <fullName evidence="1">Bis(5'-nucleosyl)-tetraphosphatase, symmetrical</fullName>
        <ecNumber evidence="1">3.6.1.41</ecNumber>
    </recommendedName>
    <alternativeName>
        <fullName evidence="1">Ap4A hydrolase</fullName>
    </alternativeName>
    <alternativeName>
        <fullName evidence="1">Diadenosine 5',5'''-P1,P4-tetraphosphate pyrophosphohydrolase</fullName>
    </alternativeName>
    <alternativeName>
        <fullName evidence="1">Diadenosine tetraphosphatase</fullName>
    </alternativeName>
</protein>
<name>APAH_BURP6</name>
<proteinExistence type="inferred from homology"/>
<accession>A3NCP7</accession>
<sequence length="282" mass="30640">MTNFSSSPPIAFGDLQGCHAAYRQLFDTLAPAADTPLWFAGDLVNRGPASLATLREIVALGERAIAVLGNHDLHLLAVAAGIRTLKPGDTIGEILDAPDADDLIEWVRHRPFAHFERGMLMVHAGLLPQWDAALALELADELQRALRAPNWRDTLRSLYGNDPNCWSPDLKHADRLRVAFNAFTRIRFCTPEGAMEFRANGGPAAAPAGYLPWFDAPGRKTADVTVVFGHWAALGLMLRENLVALDSGCVWGNRLSAVRLTDDPAARVVTQVACERCGAADE</sequence>
<organism>
    <name type="scientific">Burkholderia pseudomallei (strain 668)</name>
    <dbReference type="NCBI Taxonomy" id="320373"/>
    <lineage>
        <taxon>Bacteria</taxon>
        <taxon>Pseudomonadati</taxon>
        <taxon>Pseudomonadota</taxon>
        <taxon>Betaproteobacteria</taxon>
        <taxon>Burkholderiales</taxon>
        <taxon>Burkholderiaceae</taxon>
        <taxon>Burkholderia</taxon>
        <taxon>pseudomallei group</taxon>
    </lineage>
</organism>
<keyword id="KW-0378">Hydrolase</keyword>
<gene>
    <name evidence="1" type="primary">apaH</name>
    <name type="ordered locus">BURPS668_3106</name>
</gene>